<sequence>MADLKEIYNEELISQLIHHVRSSYPDFNKNRFLDTLRLEDWPELTLKERMRRVTVSLYETLPKQYVEALTILRDTAPHFKGLSGILFPDYVEQYGLAHWEESIKALESFTQYSTSEFAVRPFLLLDQEKMIAQLLAWSEHKNEHVRRLASEGSRPRLPWGKSIPALKSDPSPVLPILEKLMQDESLYVRKSVANNLNDISKTHPHLLRKVADQWYGTHPHTDWIIKHAYRTLLKKGDKQALALFGYENADSIQLHDLTCQPKRIVIGESLEFSFYIHSDRDQKVRIEYAIDFVKARGQRHQKVFKITETNIRKNETKSYTRIQSFKDLTTRKHYKGIHTLSVIINGEVKDSLDFQVC</sequence>
<name>YHAZ_BACSU</name>
<organism>
    <name type="scientific">Bacillus subtilis (strain 168)</name>
    <dbReference type="NCBI Taxonomy" id="224308"/>
    <lineage>
        <taxon>Bacteria</taxon>
        <taxon>Bacillati</taxon>
        <taxon>Bacillota</taxon>
        <taxon>Bacilli</taxon>
        <taxon>Bacillales</taxon>
        <taxon>Bacillaceae</taxon>
        <taxon>Bacillus</taxon>
    </lineage>
</organism>
<reference key="1">
    <citation type="submission" date="1997-06" db="EMBL/GenBank/DDBJ databases">
        <authorList>
            <person name="Noback M.A."/>
            <person name="Terpstra P."/>
            <person name="Holsappel S."/>
            <person name="Venema G."/>
            <person name="Bron S."/>
        </authorList>
    </citation>
    <scope>NUCLEOTIDE SEQUENCE [GENOMIC DNA]</scope>
    <source>
        <strain>168</strain>
    </source>
</reference>
<reference key="2">
    <citation type="journal article" date="1997" name="Nature">
        <title>The complete genome sequence of the Gram-positive bacterium Bacillus subtilis.</title>
        <authorList>
            <person name="Kunst F."/>
            <person name="Ogasawara N."/>
            <person name="Moszer I."/>
            <person name="Albertini A.M."/>
            <person name="Alloni G."/>
            <person name="Azevedo V."/>
            <person name="Bertero M.G."/>
            <person name="Bessieres P."/>
            <person name="Bolotin A."/>
            <person name="Borchert S."/>
            <person name="Borriss R."/>
            <person name="Boursier L."/>
            <person name="Brans A."/>
            <person name="Braun M."/>
            <person name="Brignell S.C."/>
            <person name="Bron S."/>
            <person name="Brouillet S."/>
            <person name="Bruschi C.V."/>
            <person name="Caldwell B."/>
            <person name="Capuano V."/>
            <person name="Carter N.M."/>
            <person name="Choi S.-K."/>
            <person name="Codani J.-J."/>
            <person name="Connerton I.F."/>
            <person name="Cummings N.J."/>
            <person name="Daniel R.A."/>
            <person name="Denizot F."/>
            <person name="Devine K.M."/>
            <person name="Duesterhoeft A."/>
            <person name="Ehrlich S.D."/>
            <person name="Emmerson P.T."/>
            <person name="Entian K.-D."/>
            <person name="Errington J."/>
            <person name="Fabret C."/>
            <person name="Ferrari E."/>
            <person name="Foulger D."/>
            <person name="Fritz C."/>
            <person name="Fujita M."/>
            <person name="Fujita Y."/>
            <person name="Fuma S."/>
            <person name="Galizzi A."/>
            <person name="Galleron N."/>
            <person name="Ghim S.-Y."/>
            <person name="Glaser P."/>
            <person name="Goffeau A."/>
            <person name="Golightly E.J."/>
            <person name="Grandi G."/>
            <person name="Guiseppi G."/>
            <person name="Guy B.J."/>
            <person name="Haga K."/>
            <person name="Haiech J."/>
            <person name="Harwood C.R."/>
            <person name="Henaut A."/>
            <person name="Hilbert H."/>
            <person name="Holsappel S."/>
            <person name="Hosono S."/>
            <person name="Hullo M.-F."/>
            <person name="Itaya M."/>
            <person name="Jones L.-M."/>
            <person name="Joris B."/>
            <person name="Karamata D."/>
            <person name="Kasahara Y."/>
            <person name="Klaerr-Blanchard M."/>
            <person name="Klein C."/>
            <person name="Kobayashi Y."/>
            <person name="Koetter P."/>
            <person name="Koningstein G."/>
            <person name="Krogh S."/>
            <person name="Kumano M."/>
            <person name="Kurita K."/>
            <person name="Lapidus A."/>
            <person name="Lardinois S."/>
            <person name="Lauber J."/>
            <person name="Lazarevic V."/>
            <person name="Lee S.-M."/>
            <person name="Levine A."/>
            <person name="Liu H."/>
            <person name="Masuda S."/>
            <person name="Mauel C."/>
            <person name="Medigue C."/>
            <person name="Medina N."/>
            <person name="Mellado R.P."/>
            <person name="Mizuno M."/>
            <person name="Moestl D."/>
            <person name="Nakai S."/>
            <person name="Noback M."/>
            <person name="Noone D."/>
            <person name="O'Reilly M."/>
            <person name="Ogawa K."/>
            <person name="Ogiwara A."/>
            <person name="Oudega B."/>
            <person name="Park S.-H."/>
            <person name="Parro V."/>
            <person name="Pohl T.M."/>
            <person name="Portetelle D."/>
            <person name="Porwollik S."/>
            <person name="Prescott A.M."/>
            <person name="Presecan E."/>
            <person name="Pujic P."/>
            <person name="Purnelle B."/>
            <person name="Rapoport G."/>
            <person name="Rey M."/>
            <person name="Reynolds S."/>
            <person name="Rieger M."/>
            <person name="Rivolta C."/>
            <person name="Rocha E."/>
            <person name="Roche B."/>
            <person name="Rose M."/>
            <person name="Sadaie Y."/>
            <person name="Sato T."/>
            <person name="Scanlan E."/>
            <person name="Schleich S."/>
            <person name="Schroeter R."/>
            <person name="Scoffone F."/>
            <person name="Sekiguchi J."/>
            <person name="Sekowska A."/>
            <person name="Seror S.J."/>
            <person name="Serror P."/>
            <person name="Shin B.-S."/>
            <person name="Soldo B."/>
            <person name="Sorokin A."/>
            <person name="Tacconi E."/>
            <person name="Takagi T."/>
            <person name="Takahashi H."/>
            <person name="Takemaru K."/>
            <person name="Takeuchi M."/>
            <person name="Tamakoshi A."/>
            <person name="Tanaka T."/>
            <person name="Terpstra P."/>
            <person name="Tognoni A."/>
            <person name="Tosato V."/>
            <person name="Uchiyama S."/>
            <person name="Vandenbol M."/>
            <person name="Vannier F."/>
            <person name="Vassarotti A."/>
            <person name="Viari A."/>
            <person name="Wambutt R."/>
            <person name="Wedler E."/>
            <person name="Wedler H."/>
            <person name="Weitzenegger T."/>
            <person name="Winters P."/>
            <person name="Wipat A."/>
            <person name="Yamamoto H."/>
            <person name="Yamane K."/>
            <person name="Yasumoto K."/>
            <person name="Yata K."/>
            <person name="Yoshida K."/>
            <person name="Yoshikawa H.-F."/>
            <person name="Zumstein E."/>
            <person name="Yoshikawa H."/>
            <person name="Danchin A."/>
        </authorList>
    </citation>
    <scope>NUCLEOTIDE SEQUENCE [LARGE SCALE GENOMIC DNA]</scope>
    <source>
        <strain>168</strain>
    </source>
</reference>
<reference key="3">
    <citation type="journal article" date="2005" name="J. Bacteriol.">
        <title>Genetic composition of the Bacillus subtilis SOS system.</title>
        <authorList>
            <person name="Au N."/>
            <person name="Kuester-Schoeck E."/>
            <person name="Mandava V."/>
            <person name="Bothwell L.E."/>
            <person name="Canny S.P."/>
            <person name="Chachu K."/>
            <person name="Colavito S.A."/>
            <person name="Fuller S.N."/>
            <person name="Groban E.S."/>
            <person name="Hensley L.A."/>
            <person name="O'Brien T.C."/>
            <person name="Shah A."/>
            <person name="Tierney J.T."/>
            <person name="Tomm L.L."/>
            <person name="O'Gara T.M."/>
            <person name="Goranov A.I."/>
            <person name="Grossman A.D."/>
            <person name="Lovett C.M."/>
        </authorList>
    </citation>
    <scope>INDUCTION BY MITOMYCIN C AND UV</scope>
    <source>
        <strain>168 / YB886 / BG214</strain>
    </source>
</reference>
<evidence type="ECO:0000269" key="1">
    <source>
    </source>
</evidence>
<protein>
    <recommendedName>
        <fullName>Uncharacterized protein YhaZ</fullName>
    </recommendedName>
</protein>
<proteinExistence type="evidence at transcript level"/>
<keyword id="KW-1185">Reference proteome</keyword>
<dbReference type="EMBL" id="Y14080">
    <property type="protein sequence ID" value="CAA74443.1"/>
    <property type="molecule type" value="Genomic_DNA"/>
</dbReference>
<dbReference type="EMBL" id="AL009126">
    <property type="protein sequence ID" value="CAB12820.1"/>
    <property type="molecule type" value="Genomic_DNA"/>
</dbReference>
<dbReference type="PIR" id="D69820">
    <property type="entry name" value="D69820"/>
</dbReference>
<dbReference type="RefSeq" id="NP_388862.1">
    <property type="nucleotide sequence ID" value="NC_000964.3"/>
</dbReference>
<dbReference type="RefSeq" id="WP_003245738.1">
    <property type="nucleotide sequence ID" value="NZ_OZ025638.1"/>
</dbReference>
<dbReference type="SMR" id="O07541"/>
<dbReference type="FunCoup" id="O07541">
    <property type="interactions" value="5"/>
</dbReference>
<dbReference type="STRING" id="224308.BSU09810"/>
<dbReference type="PaxDb" id="224308-BSU09810"/>
<dbReference type="EnsemblBacteria" id="CAB12820">
    <property type="protein sequence ID" value="CAB12820"/>
    <property type="gene ID" value="BSU_09810"/>
</dbReference>
<dbReference type="GeneID" id="939758"/>
<dbReference type="KEGG" id="bsu:BSU09810"/>
<dbReference type="PATRIC" id="fig|224308.179.peg.1054"/>
<dbReference type="eggNOG" id="COG4335">
    <property type="taxonomic scope" value="Bacteria"/>
</dbReference>
<dbReference type="InParanoid" id="O07541"/>
<dbReference type="OrthoDB" id="9797162at2"/>
<dbReference type="PhylomeDB" id="O07541"/>
<dbReference type="BioCyc" id="BSUB:BSU09810-MONOMER"/>
<dbReference type="Proteomes" id="UP000001570">
    <property type="component" value="Chromosome"/>
</dbReference>
<dbReference type="Gene3D" id="1.25.40.290">
    <property type="entry name" value="ARM repeat domains"/>
    <property type="match status" value="1"/>
</dbReference>
<dbReference type="InterPro" id="IPR016024">
    <property type="entry name" value="ARM-type_fold"/>
</dbReference>
<dbReference type="InterPro" id="IPR014825">
    <property type="entry name" value="DNA_alkylation"/>
</dbReference>
<dbReference type="InterPro" id="IPR021133">
    <property type="entry name" value="HEAT_type_2"/>
</dbReference>
<dbReference type="Pfam" id="PF08713">
    <property type="entry name" value="DNA_alkylation"/>
    <property type="match status" value="1"/>
</dbReference>
<dbReference type="SUPFAM" id="SSF48371">
    <property type="entry name" value="ARM repeat"/>
    <property type="match status" value="1"/>
</dbReference>
<dbReference type="PROSITE" id="PS50077">
    <property type="entry name" value="HEAT_REPEAT"/>
    <property type="match status" value="1"/>
</dbReference>
<comment type="induction">
    <text evidence="1">By mitomycin C and UV irradiation which requires RecA.</text>
</comment>
<feature type="chain" id="PRO_0000390296" description="Uncharacterized protein YhaZ">
    <location>
        <begin position="1"/>
        <end position="357"/>
    </location>
</feature>
<feature type="repeat" description="HEAT">
    <location>
        <begin position="173"/>
        <end position="211"/>
    </location>
</feature>
<gene>
    <name type="primary">yhaZ</name>
    <name type="ordered locus">BSU09810</name>
</gene>
<accession>O07541</accession>
<accession>Q796V9</accession>